<proteinExistence type="inferred from homology"/>
<name>LIS1_DEBHA</name>
<feature type="chain" id="PRO_0000240425" description="Nuclear distribution protein PAC1">
    <location>
        <begin position="1"/>
        <end position="529"/>
    </location>
</feature>
<feature type="repeat" description="WD 1">
    <location>
        <begin position="120"/>
        <end position="159"/>
    </location>
</feature>
<feature type="repeat" description="WD 2">
    <location>
        <begin position="165"/>
        <end position="218"/>
    </location>
</feature>
<feature type="repeat" description="WD 3">
    <location>
        <begin position="221"/>
        <end position="261"/>
    </location>
</feature>
<feature type="repeat" description="WD 4">
    <location>
        <begin position="264"/>
        <end position="318"/>
    </location>
</feature>
<feature type="repeat" description="WD 5">
    <location>
        <begin position="321"/>
        <end position="395"/>
    </location>
</feature>
<feature type="repeat" description="WD 6">
    <location>
        <begin position="416"/>
        <end position="455"/>
    </location>
</feature>
<feature type="repeat" description="WD 7">
    <location>
        <begin position="496"/>
        <end position="529"/>
    </location>
</feature>
<feature type="coiled-coil region" evidence="1">
    <location>
        <begin position="68"/>
        <end position="89"/>
    </location>
</feature>
<keyword id="KW-0131">Cell cycle</keyword>
<keyword id="KW-0132">Cell division</keyword>
<keyword id="KW-0175">Coiled coil</keyword>
<keyword id="KW-0963">Cytoplasm</keyword>
<keyword id="KW-0206">Cytoskeleton</keyword>
<keyword id="KW-0493">Microtubule</keyword>
<keyword id="KW-0498">Mitosis</keyword>
<keyword id="KW-1185">Reference proteome</keyword>
<keyword id="KW-0677">Repeat</keyword>
<keyword id="KW-0813">Transport</keyword>
<keyword id="KW-0853">WD repeat</keyword>
<protein>
    <recommendedName>
        <fullName evidence="1">Nuclear distribution protein PAC1</fullName>
    </recommendedName>
    <alternativeName>
        <fullName evidence="1">Lissencephaly-1 homolog</fullName>
        <shortName evidence="1">LIS-1</shortName>
    </alternativeName>
    <alternativeName>
        <fullName evidence="1">nudF homolog</fullName>
    </alternativeName>
</protein>
<accession>Q6BUA6</accession>
<reference key="1">
    <citation type="journal article" date="2004" name="Nature">
        <title>Genome evolution in yeasts.</title>
        <authorList>
            <person name="Dujon B."/>
            <person name="Sherman D."/>
            <person name="Fischer G."/>
            <person name="Durrens P."/>
            <person name="Casaregola S."/>
            <person name="Lafontaine I."/>
            <person name="de Montigny J."/>
            <person name="Marck C."/>
            <person name="Neuveglise C."/>
            <person name="Talla E."/>
            <person name="Goffard N."/>
            <person name="Frangeul L."/>
            <person name="Aigle M."/>
            <person name="Anthouard V."/>
            <person name="Babour A."/>
            <person name="Barbe V."/>
            <person name="Barnay S."/>
            <person name="Blanchin S."/>
            <person name="Beckerich J.-M."/>
            <person name="Beyne E."/>
            <person name="Bleykasten C."/>
            <person name="Boisrame A."/>
            <person name="Boyer J."/>
            <person name="Cattolico L."/>
            <person name="Confanioleri F."/>
            <person name="de Daruvar A."/>
            <person name="Despons L."/>
            <person name="Fabre E."/>
            <person name="Fairhead C."/>
            <person name="Ferry-Dumazet H."/>
            <person name="Groppi A."/>
            <person name="Hantraye F."/>
            <person name="Hennequin C."/>
            <person name="Jauniaux N."/>
            <person name="Joyet P."/>
            <person name="Kachouri R."/>
            <person name="Kerrest A."/>
            <person name="Koszul R."/>
            <person name="Lemaire M."/>
            <person name="Lesur I."/>
            <person name="Ma L."/>
            <person name="Muller H."/>
            <person name="Nicaud J.-M."/>
            <person name="Nikolski M."/>
            <person name="Oztas S."/>
            <person name="Ozier-Kalogeropoulos O."/>
            <person name="Pellenz S."/>
            <person name="Potier S."/>
            <person name="Richard G.-F."/>
            <person name="Straub M.-L."/>
            <person name="Suleau A."/>
            <person name="Swennen D."/>
            <person name="Tekaia F."/>
            <person name="Wesolowski-Louvel M."/>
            <person name="Westhof E."/>
            <person name="Wirth B."/>
            <person name="Zeniou-Meyer M."/>
            <person name="Zivanovic Y."/>
            <person name="Bolotin-Fukuhara M."/>
            <person name="Thierry A."/>
            <person name="Bouchier C."/>
            <person name="Caudron B."/>
            <person name="Scarpelli C."/>
            <person name="Gaillardin C."/>
            <person name="Weissenbach J."/>
            <person name="Wincker P."/>
            <person name="Souciet J.-L."/>
        </authorList>
    </citation>
    <scope>NUCLEOTIDE SEQUENCE [LARGE SCALE GENOMIC DNA]</scope>
    <source>
        <strain>ATCC 36239 / CBS 767 / BCRC 21394 / JCM 1990 / NBRC 0083 / IGC 2968</strain>
    </source>
</reference>
<evidence type="ECO:0000255" key="1">
    <source>
        <dbReference type="HAMAP-Rule" id="MF_03141"/>
    </source>
</evidence>
<organism>
    <name type="scientific">Debaryomyces hansenii (strain ATCC 36239 / CBS 767 / BCRC 21394 / JCM 1990 / NBRC 0083 / IGC 2968)</name>
    <name type="common">Yeast</name>
    <name type="synonym">Torulaspora hansenii</name>
    <dbReference type="NCBI Taxonomy" id="284592"/>
    <lineage>
        <taxon>Eukaryota</taxon>
        <taxon>Fungi</taxon>
        <taxon>Dikarya</taxon>
        <taxon>Ascomycota</taxon>
        <taxon>Saccharomycotina</taxon>
        <taxon>Pichiomycetes</taxon>
        <taxon>Debaryomycetaceae</taxon>
        <taxon>Debaryomyces</taxon>
    </lineage>
</organism>
<gene>
    <name evidence="1" type="primary">PAC1</name>
    <name evidence="1" type="synonym">LIS1</name>
    <name type="ordered locus">DEHA2C12386g</name>
</gene>
<dbReference type="EMBL" id="CR382135">
    <property type="protein sequence ID" value="CAG86289.2"/>
    <property type="molecule type" value="Genomic_DNA"/>
</dbReference>
<dbReference type="RefSeq" id="XP_458213.2">
    <property type="nucleotide sequence ID" value="XM_458213.1"/>
</dbReference>
<dbReference type="SMR" id="Q6BUA6"/>
<dbReference type="FunCoup" id="Q6BUA6">
    <property type="interactions" value="75"/>
</dbReference>
<dbReference type="STRING" id="284592.Q6BUA6"/>
<dbReference type="GeneID" id="2900137"/>
<dbReference type="KEGG" id="dha:DEHA2C12386g"/>
<dbReference type="VEuPathDB" id="FungiDB:DEHA2C12386g"/>
<dbReference type="eggNOG" id="KOG0295">
    <property type="taxonomic scope" value="Eukaryota"/>
</dbReference>
<dbReference type="HOGENOM" id="CLU_000288_57_15_1"/>
<dbReference type="InParanoid" id="Q6BUA6"/>
<dbReference type="OMA" id="RGTCLMT"/>
<dbReference type="OrthoDB" id="10264588at2759"/>
<dbReference type="Proteomes" id="UP000000599">
    <property type="component" value="Chromosome C"/>
</dbReference>
<dbReference type="GO" id="GO:0005737">
    <property type="term" value="C:cytoplasm"/>
    <property type="evidence" value="ECO:0007669"/>
    <property type="project" value="UniProtKB-UniRule"/>
</dbReference>
<dbReference type="GO" id="GO:0005874">
    <property type="term" value="C:microtubule"/>
    <property type="evidence" value="ECO:0007669"/>
    <property type="project" value="UniProtKB-KW"/>
</dbReference>
<dbReference type="GO" id="GO:0005875">
    <property type="term" value="C:microtubule associated complex"/>
    <property type="evidence" value="ECO:0007669"/>
    <property type="project" value="UniProtKB-UniRule"/>
</dbReference>
<dbReference type="GO" id="GO:0000922">
    <property type="term" value="C:spindle pole"/>
    <property type="evidence" value="ECO:0007669"/>
    <property type="project" value="UniProtKB-SubCell"/>
</dbReference>
<dbReference type="GO" id="GO:1990234">
    <property type="term" value="C:transferase complex"/>
    <property type="evidence" value="ECO:0007669"/>
    <property type="project" value="UniProtKB-ARBA"/>
</dbReference>
<dbReference type="GO" id="GO:0070840">
    <property type="term" value="F:dynein complex binding"/>
    <property type="evidence" value="ECO:0007669"/>
    <property type="project" value="UniProtKB-UniRule"/>
</dbReference>
<dbReference type="GO" id="GO:0051301">
    <property type="term" value="P:cell division"/>
    <property type="evidence" value="ECO:0007669"/>
    <property type="project" value="UniProtKB-KW"/>
</dbReference>
<dbReference type="GO" id="GO:0000132">
    <property type="term" value="P:establishment of mitotic spindle orientation"/>
    <property type="evidence" value="ECO:0007669"/>
    <property type="project" value="UniProtKB-UniRule"/>
</dbReference>
<dbReference type="GO" id="GO:0051012">
    <property type="term" value="P:microtubule sliding"/>
    <property type="evidence" value="ECO:0007669"/>
    <property type="project" value="UniProtKB-UniRule"/>
</dbReference>
<dbReference type="CDD" id="cd00200">
    <property type="entry name" value="WD40"/>
    <property type="match status" value="1"/>
</dbReference>
<dbReference type="Gene3D" id="1.20.960.30">
    <property type="match status" value="1"/>
</dbReference>
<dbReference type="Gene3D" id="2.130.10.10">
    <property type="entry name" value="YVTN repeat-like/Quinoprotein amine dehydrogenase"/>
    <property type="match status" value="2"/>
</dbReference>
<dbReference type="HAMAP" id="MF_03141">
    <property type="entry name" value="lis1"/>
    <property type="match status" value="1"/>
</dbReference>
<dbReference type="InterPro" id="IPR017252">
    <property type="entry name" value="Dynein_regulator_LIS1"/>
</dbReference>
<dbReference type="InterPro" id="IPR020472">
    <property type="entry name" value="G-protein_beta_WD-40_rep"/>
</dbReference>
<dbReference type="InterPro" id="IPR037190">
    <property type="entry name" value="LIS1_N"/>
</dbReference>
<dbReference type="InterPro" id="IPR015943">
    <property type="entry name" value="WD40/YVTN_repeat-like_dom_sf"/>
</dbReference>
<dbReference type="InterPro" id="IPR019775">
    <property type="entry name" value="WD40_repeat_CS"/>
</dbReference>
<dbReference type="InterPro" id="IPR036322">
    <property type="entry name" value="WD40_repeat_dom_sf"/>
</dbReference>
<dbReference type="InterPro" id="IPR001680">
    <property type="entry name" value="WD40_rpt"/>
</dbReference>
<dbReference type="PANTHER" id="PTHR22847:SF637">
    <property type="entry name" value="WD REPEAT DOMAIN 5B"/>
    <property type="match status" value="1"/>
</dbReference>
<dbReference type="PANTHER" id="PTHR22847">
    <property type="entry name" value="WD40 REPEAT PROTEIN"/>
    <property type="match status" value="1"/>
</dbReference>
<dbReference type="Pfam" id="PF00400">
    <property type="entry name" value="WD40"/>
    <property type="match status" value="4"/>
</dbReference>
<dbReference type="PIRSF" id="PIRSF037647">
    <property type="entry name" value="Dynein_regulator_Lis1"/>
    <property type="match status" value="1"/>
</dbReference>
<dbReference type="PRINTS" id="PR00320">
    <property type="entry name" value="GPROTEINBRPT"/>
</dbReference>
<dbReference type="SMART" id="SM00320">
    <property type="entry name" value="WD40"/>
    <property type="match status" value="7"/>
</dbReference>
<dbReference type="SUPFAM" id="SSF109925">
    <property type="entry name" value="Lissencephaly-1 protein (Lis-1, PAF-AH alpha) N-terminal domain"/>
    <property type="match status" value="1"/>
</dbReference>
<dbReference type="SUPFAM" id="SSF50978">
    <property type="entry name" value="WD40 repeat-like"/>
    <property type="match status" value="1"/>
</dbReference>
<dbReference type="PROSITE" id="PS00678">
    <property type="entry name" value="WD_REPEATS_1"/>
    <property type="match status" value="4"/>
</dbReference>
<dbReference type="PROSITE" id="PS50082">
    <property type="entry name" value="WD_REPEATS_2"/>
    <property type="match status" value="3"/>
</dbReference>
<dbReference type="PROSITE" id="PS50294">
    <property type="entry name" value="WD_REPEATS_REGION"/>
    <property type="match status" value="1"/>
</dbReference>
<sequence>MLQPQILTARQQQELNKAIIQYIKPIAEEANDGDLIQKLSESLDVPLGSIDDSVIPNYLEKKWSTVLRLQHKIIDLEGEVSNLRTVIDSQQIVPSASASVIGKDKINWLPSSSIKAFKTQSHQLVQSVSIHPALPIILGGCSDGSLIIWNLVNDESLIPEKIIKAHIRGVNTIAWSKKPVDLSGKGSEAKGIAHVMATCSSDLSIKIWDGATFKHIRTLTGHEHTISSIVFSASKPNILYSVSRDKSVKVWDLVNGYCIKTFIGHSDWVRDIDVISVNSNLLQEQSDINPELGDFLVTCSNDQSIRLSHAESGTGLSLSIGHTHVIECVKFLPFHSNYIIDKYIKENESLFPNISPEVLDDPNYTNLLGYKYCISGGRDNSVKLWLLPPPVFRPHRHPLPSQLNNSQGWLIADLVGHQSWVKSLHIHPNGRFVFSGSDDKTIKIWDLSSLNVNGRVKCVKNLIGHEGFVNDIEFASFEITNNIHASKTADDGKTKTEEDRRNELMKSIESKIRCLFISGGVDNCIRLWS</sequence>
<comment type="function">
    <text evidence="1">Positively regulates the activity of the minus-end directed microtubule motor protein dynein. Plays a central role in positioning the mitotic spindle at the bud neck during cell division. Targets cytoplasmic dynein to microtubule plus ends, thereby promoting dynein-mediated microtubule sliding along the bud cortex and consequently the movement of the mitotic spindle to the bud neck.</text>
</comment>
<comment type="subunit">
    <text evidence="1">Self-associates. Interacts with NDL1 and dynein.</text>
</comment>
<comment type="subcellular location">
    <subcellularLocation>
        <location>Cytoplasm</location>
        <location>Cytoskeleton</location>
    </subcellularLocation>
    <subcellularLocation>
        <location evidence="1">Cytoplasm</location>
        <location evidence="1">Cytoskeleton</location>
        <location evidence="1">Spindle pole</location>
    </subcellularLocation>
    <text evidence="1">Localizes to the plus ends of microtubules and the mitotic spindle poles.</text>
</comment>
<comment type="similarity">
    <text evidence="1">Belongs to the WD repeat LIS1/nudF family.</text>
</comment>